<proteinExistence type="inferred from homology"/>
<dbReference type="EMBL" id="CP000243">
    <property type="protein sequence ID" value="ABE07412.1"/>
    <property type="status" value="ALT_INIT"/>
    <property type="molecule type" value="Genomic_DNA"/>
</dbReference>
<dbReference type="RefSeq" id="WP_000455604.1">
    <property type="nucleotide sequence ID" value="NZ_CP064825.1"/>
</dbReference>
<dbReference type="SMR" id="Q1RB52"/>
<dbReference type="KEGG" id="eci:UTI89_C1936"/>
<dbReference type="HOGENOM" id="CLU_090931_5_0_6"/>
<dbReference type="Proteomes" id="UP000001952">
    <property type="component" value="Chromosome"/>
</dbReference>
<dbReference type="CDD" id="cd20293">
    <property type="entry name" value="cupin_HutD_N"/>
    <property type="match status" value="1"/>
</dbReference>
<dbReference type="Gene3D" id="2.60.120.10">
    <property type="entry name" value="Jelly Rolls"/>
    <property type="match status" value="1"/>
</dbReference>
<dbReference type="HAMAP" id="MF_01591">
    <property type="entry name" value="Ves"/>
    <property type="match status" value="1"/>
</dbReference>
<dbReference type="InterPro" id="IPR014710">
    <property type="entry name" value="RmlC-like_jellyroll"/>
</dbReference>
<dbReference type="InterPro" id="IPR011051">
    <property type="entry name" value="RmlC_Cupin_sf"/>
</dbReference>
<dbReference type="InterPro" id="IPR010282">
    <property type="entry name" value="Uncharacterised_HutD/Ves"/>
</dbReference>
<dbReference type="InterPro" id="IPR023482">
    <property type="entry name" value="Uncharacterised_Ves"/>
</dbReference>
<dbReference type="NCBIfam" id="NF008488">
    <property type="entry name" value="PRK11396.1"/>
    <property type="match status" value="1"/>
</dbReference>
<dbReference type="PANTHER" id="PTHR37943">
    <property type="entry name" value="PROTEIN VES"/>
    <property type="match status" value="1"/>
</dbReference>
<dbReference type="PANTHER" id="PTHR37943:SF1">
    <property type="entry name" value="PROTEIN VES"/>
    <property type="match status" value="1"/>
</dbReference>
<dbReference type="Pfam" id="PF05962">
    <property type="entry name" value="HutD"/>
    <property type="match status" value="1"/>
</dbReference>
<dbReference type="SUPFAM" id="SSF51182">
    <property type="entry name" value="RmlC-like cupins"/>
    <property type="match status" value="1"/>
</dbReference>
<evidence type="ECO:0000255" key="1">
    <source>
        <dbReference type="HAMAP-Rule" id="MF_01591"/>
    </source>
</evidence>
<evidence type="ECO:0000305" key="2"/>
<reference key="1">
    <citation type="journal article" date="2006" name="Proc. Natl. Acad. Sci. U.S.A.">
        <title>Identification of genes subject to positive selection in uropathogenic strains of Escherichia coli: a comparative genomics approach.</title>
        <authorList>
            <person name="Chen S.L."/>
            <person name="Hung C.-S."/>
            <person name="Xu J."/>
            <person name="Reigstad C.S."/>
            <person name="Magrini V."/>
            <person name="Sabo A."/>
            <person name="Blasiar D."/>
            <person name="Bieri T."/>
            <person name="Meyer R.R."/>
            <person name="Ozersky P."/>
            <person name="Armstrong J.R."/>
            <person name="Fulton R.S."/>
            <person name="Latreille J.P."/>
            <person name="Spieth J."/>
            <person name="Hooton T.M."/>
            <person name="Mardis E.R."/>
            <person name="Hultgren S.J."/>
            <person name="Gordon J.I."/>
        </authorList>
    </citation>
    <scope>NUCLEOTIDE SEQUENCE [LARGE SCALE GENOMIC DNA]</scope>
    <source>
        <strain>UTI89 / UPEC</strain>
    </source>
</reference>
<name>VES_ECOUT</name>
<accession>Q1RB52</accession>
<sequence>MEYFDMRKMSVNLWRNAAGETREICTFPPAKRDFYWRASITSIAANGEFSLFPGMERIVTLLEGGEMFLESADRFNHTLKPLQPFSFAADLVVKAKLTAGQMSMDFNIMTRLDVCKAKVRIAERTFTTFGSRGGVVFVINGAWQLGDKLLTTDQGACWFDGRHTLRLLQPQGKLLFSEINWLAGHSPDQVQ</sequence>
<gene>
    <name evidence="1" type="primary">ves</name>
    <name type="ordered locus">UTI89_C1936</name>
</gene>
<comment type="similarity">
    <text evidence="1">Belongs to the Ves family.</text>
</comment>
<comment type="sequence caution" evidence="2">
    <conflict type="erroneous initiation">
        <sequence resource="EMBL-CDS" id="ABE07412"/>
    </conflict>
</comment>
<protein>
    <recommendedName>
        <fullName evidence="1">Protein Ves</fullName>
    </recommendedName>
</protein>
<organism>
    <name type="scientific">Escherichia coli (strain UTI89 / UPEC)</name>
    <dbReference type="NCBI Taxonomy" id="364106"/>
    <lineage>
        <taxon>Bacteria</taxon>
        <taxon>Pseudomonadati</taxon>
        <taxon>Pseudomonadota</taxon>
        <taxon>Gammaproteobacteria</taxon>
        <taxon>Enterobacterales</taxon>
        <taxon>Enterobacteriaceae</taxon>
        <taxon>Escherichia</taxon>
    </lineage>
</organism>
<feature type="chain" id="PRO_0000315003" description="Protein Ves">
    <location>
        <begin position="1"/>
        <end position="191"/>
    </location>
</feature>